<evidence type="ECO:0000250" key="1"/>
<evidence type="ECO:0000255" key="2">
    <source>
        <dbReference type="HAMAP-Rule" id="MF_00403"/>
    </source>
</evidence>
<evidence type="ECO:0000305" key="3"/>
<organism>
    <name type="scientific">Cupriavidus pinatubonensis (strain JMP 134 / LMG 1197)</name>
    <name type="common">Cupriavidus necator (strain JMP 134)</name>
    <dbReference type="NCBI Taxonomy" id="264198"/>
    <lineage>
        <taxon>Bacteria</taxon>
        <taxon>Pseudomonadati</taxon>
        <taxon>Pseudomonadota</taxon>
        <taxon>Betaproteobacteria</taxon>
        <taxon>Burkholderiales</taxon>
        <taxon>Burkholderiaceae</taxon>
        <taxon>Cupriavidus</taxon>
    </lineage>
</organism>
<feature type="chain" id="PRO_0000226409" description="Small ribosomal subunit protein uS12">
    <location>
        <begin position="1"/>
        <end position="125"/>
    </location>
</feature>
<feature type="modified residue" description="3-methylthioaspartic acid" evidence="1">
    <location>
        <position position="89"/>
    </location>
</feature>
<reference key="1">
    <citation type="journal article" date="2010" name="PLoS ONE">
        <title>The complete multipartite genome sequence of Cupriavidus necator JMP134, a versatile pollutant degrader.</title>
        <authorList>
            <person name="Lykidis A."/>
            <person name="Perez-Pantoja D."/>
            <person name="Ledger T."/>
            <person name="Mavromatis K."/>
            <person name="Anderson I.J."/>
            <person name="Ivanova N.N."/>
            <person name="Hooper S.D."/>
            <person name="Lapidus A."/>
            <person name="Lucas S."/>
            <person name="Gonzalez B."/>
            <person name="Kyrpides N.C."/>
        </authorList>
    </citation>
    <scope>NUCLEOTIDE SEQUENCE [LARGE SCALE GENOMIC DNA]</scope>
    <source>
        <strain>JMP134 / LMG 1197</strain>
    </source>
</reference>
<gene>
    <name evidence="2" type="primary">rpsL</name>
    <name type="ordered locus">Reut_A3185</name>
</gene>
<sequence>MPTINQLVRKPRVSEVIKSKSPALENCPQRRGVCTRVYTTTPKKPNSALRKVAKVRLTNGFEVISYIGGEGHNLQEHSVVLIRGGRVKDLPGVRYHIVRGSLDLQGVKDRKQARSKYGAKRPKAA</sequence>
<keyword id="KW-0488">Methylation</keyword>
<keyword id="KW-0687">Ribonucleoprotein</keyword>
<keyword id="KW-0689">Ribosomal protein</keyword>
<keyword id="KW-0694">RNA-binding</keyword>
<keyword id="KW-0699">rRNA-binding</keyword>
<keyword id="KW-0820">tRNA-binding</keyword>
<protein>
    <recommendedName>
        <fullName evidence="2">Small ribosomal subunit protein uS12</fullName>
    </recommendedName>
    <alternativeName>
        <fullName evidence="3">30S ribosomal protein S12</fullName>
    </alternativeName>
</protein>
<dbReference type="EMBL" id="CP000090">
    <property type="protein sequence ID" value="AAZ62545.1"/>
    <property type="molecule type" value="Genomic_DNA"/>
</dbReference>
<dbReference type="SMR" id="Q46WD8"/>
<dbReference type="STRING" id="264198.Reut_A3185"/>
<dbReference type="KEGG" id="reu:Reut_A3185"/>
<dbReference type="eggNOG" id="COG0048">
    <property type="taxonomic scope" value="Bacteria"/>
</dbReference>
<dbReference type="HOGENOM" id="CLU_104295_1_2_4"/>
<dbReference type="OrthoDB" id="9802366at2"/>
<dbReference type="GO" id="GO:0015935">
    <property type="term" value="C:small ribosomal subunit"/>
    <property type="evidence" value="ECO:0007669"/>
    <property type="project" value="InterPro"/>
</dbReference>
<dbReference type="GO" id="GO:0019843">
    <property type="term" value="F:rRNA binding"/>
    <property type="evidence" value="ECO:0007669"/>
    <property type="project" value="UniProtKB-UniRule"/>
</dbReference>
<dbReference type="GO" id="GO:0003735">
    <property type="term" value="F:structural constituent of ribosome"/>
    <property type="evidence" value="ECO:0007669"/>
    <property type="project" value="InterPro"/>
</dbReference>
<dbReference type="GO" id="GO:0000049">
    <property type="term" value="F:tRNA binding"/>
    <property type="evidence" value="ECO:0007669"/>
    <property type="project" value="UniProtKB-UniRule"/>
</dbReference>
<dbReference type="GO" id="GO:0006412">
    <property type="term" value="P:translation"/>
    <property type="evidence" value="ECO:0007669"/>
    <property type="project" value="UniProtKB-UniRule"/>
</dbReference>
<dbReference type="CDD" id="cd03368">
    <property type="entry name" value="Ribosomal_S12"/>
    <property type="match status" value="1"/>
</dbReference>
<dbReference type="FunFam" id="2.40.50.140:FF:000001">
    <property type="entry name" value="30S ribosomal protein S12"/>
    <property type="match status" value="1"/>
</dbReference>
<dbReference type="Gene3D" id="2.40.50.140">
    <property type="entry name" value="Nucleic acid-binding proteins"/>
    <property type="match status" value="1"/>
</dbReference>
<dbReference type="HAMAP" id="MF_00403_B">
    <property type="entry name" value="Ribosomal_uS12_B"/>
    <property type="match status" value="1"/>
</dbReference>
<dbReference type="InterPro" id="IPR012340">
    <property type="entry name" value="NA-bd_OB-fold"/>
</dbReference>
<dbReference type="InterPro" id="IPR006032">
    <property type="entry name" value="Ribosomal_uS12"/>
</dbReference>
<dbReference type="InterPro" id="IPR005679">
    <property type="entry name" value="Ribosomal_uS12_bac"/>
</dbReference>
<dbReference type="NCBIfam" id="TIGR00981">
    <property type="entry name" value="rpsL_bact"/>
    <property type="match status" value="1"/>
</dbReference>
<dbReference type="PANTHER" id="PTHR11652">
    <property type="entry name" value="30S RIBOSOMAL PROTEIN S12 FAMILY MEMBER"/>
    <property type="match status" value="1"/>
</dbReference>
<dbReference type="Pfam" id="PF00164">
    <property type="entry name" value="Ribosom_S12_S23"/>
    <property type="match status" value="1"/>
</dbReference>
<dbReference type="PIRSF" id="PIRSF002133">
    <property type="entry name" value="Ribosomal_S12/S23"/>
    <property type="match status" value="1"/>
</dbReference>
<dbReference type="PRINTS" id="PR01034">
    <property type="entry name" value="RIBOSOMALS12"/>
</dbReference>
<dbReference type="SUPFAM" id="SSF50249">
    <property type="entry name" value="Nucleic acid-binding proteins"/>
    <property type="match status" value="1"/>
</dbReference>
<dbReference type="PROSITE" id="PS00055">
    <property type="entry name" value="RIBOSOMAL_S12"/>
    <property type="match status" value="1"/>
</dbReference>
<accession>Q46WD8</accession>
<name>RS12_CUPPJ</name>
<proteinExistence type="inferred from homology"/>
<comment type="function">
    <text evidence="2">With S4 and S5 plays an important role in translational accuracy.</text>
</comment>
<comment type="function">
    <text evidence="2">Interacts with and stabilizes bases of the 16S rRNA that are involved in tRNA selection in the A site and with the mRNA backbone. Located at the interface of the 30S and 50S subunits, it traverses the body of the 30S subunit contacting proteins on the other side and probably holding the rRNA structure together. The combined cluster of proteins S8, S12 and S17 appears to hold together the shoulder and platform of the 30S subunit.</text>
</comment>
<comment type="subunit">
    <text evidence="2">Part of the 30S ribosomal subunit. Contacts proteins S8 and S17. May interact with IF1 in the 30S initiation complex.</text>
</comment>
<comment type="similarity">
    <text evidence="2">Belongs to the universal ribosomal protein uS12 family.</text>
</comment>